<reference key="1">
    <citation type="journal article" date="1995" name="Plant Mol. Biol. Rep.">
        <title>Complete nucleotide sequence of the Porphyra purpurea chloroplast genome.</title>
        <authorList>
            <person name="Reith M.E."/>
            <person name="Munholland J."/>
        </authorList>
    </citation>
    <scope>NUCLEOTIDE SEQUENCE [LARGE SCALE GENOMIC DNA]</scope>
    <source>
        <strain>Avonport</strain>
    </source>
</reference>
<keyword id="KW-0150">Chloroplast</keyword>
<keyword id="KW-0472">Membrane</keyword>
<keyword id="KW-0934">Plastid</keyword>
<keyword id="KW-0793">Thylakoid</keyword>
<keyword id="KW-0812">Transmembrane</keyword>
<keyword id="KW-1133">Transmembrane helix</keyword>
<feature type="chain" id="PRO_0000207944" description="Protein PsbN">
    <location>
        <begin position="1"/>
        <end position="43"/>
    </location>
</feature>
<feature type="transmembrane region" description="Helical" evidence="1">
    <location>
        <begin position="5"/>
        <end position="27"/>
    </location>
</feature>
<protein>
    <recommendedName>
        <fullName evidence="1">Protein PsbN</fullName>
    </recommendedName>
</protein>
<proteinExistence type="inferred from homology"/>
<geneLocation type="chloroplast"/>
<accession>P51324</accession>
<name>PSBN_PORPU</name>
<evidence type="ECO:0000255" key="1">
    <source>
        <dbReference type="HAMAP-Rule" id="MF_00293"/>
    </source>
</evidence>
<dbReference type="EMBL" id="U38804">
    <property type="protein sequence ID" value="AAC08210.1"/>
    <property type="molecule type" value="Genomic_DNA"/>
</dbReference>
<dbReference type="PIR" id="S73245">
    <property type="entry name" value="S73245"/>
</dbReference>
<dbReference type="RefSeq" id="NP_053934.1">
    <property type="nucleotide sequence ID" value="NC_000925.1"/>
</dbReference>
<dbReference type="SMR" id="P51324"/>
<dbReference type="GeneID" id="809953"/>
<dbReference type="GO" id="GO:0009535">
    <property type="term" value="C:chloroplast thylakoid membrane"/>
    <property type="evidence" value="ECO:0007669"/>
    <property type="project" value="UniProtKB-SubCell"/>
</dbReference>
<dbReference type="GO" id="GO:0015979">
    <property type="term" value="P:photosynthesis"/>
    <property type="evidence" value="ECO:0007669"/>
    <property type="project" value="InterPro"/>
</dbReference>
<dbReference type="HAMAP" id="MF_00293">
    <property type="entry name" value="PSII_PsbN"/>
    <property type="match status" value="1"/>
</dbReference>
<dbReference type="InterPro" id="IPR003398">
    <property type="entry name" value="PSII_PsbN"/>
</dbReference>
<dbReference type="NCBIfam" id="NF009650">
    <property type="entry name" value="PRK13183.1"/>
    <property type="match status" value="1"/>
</dbReference>
<dbReference type="PANTHER" id="PTHR35326">
    <property type="entry name" value="PROTEIN PSBN"/>
    <property type="match status" value="1"/>
</dbReference>
<dbReference type="PANTHER" id="PTHR35326:SF3">
    <property type="entry name" value="PROTEIN PSBN"/>
    <property type="match status" value="1"/>
</dbReference>
<dbReference type="Pfam" id="PF02468">
    <property type="entry name" value="PsbN"/>
    <property type="match status" value="1"/>
</dbReference>
<organism>
    <name type="scientific">Porphyra purpurea</name>
    <name type="common">Red seaweed</name>
    <name type="synonym">Ulva purpurea</name>
    <dbReference type="NCBI Taxonomy" id="2787"/>
    <lineage>
        <taxon>Eukaryota</taxon>
        <taxon>Rhodophyta</taxon>
        <taxon>Bangiophyceae</taxon>
        <taxon>Bangiales</taxon>
        <taxon>Bangiaceae</taxon>
        <taxon>Porphyra</taxon>
    </lineage>
</organism>
<sequence length="43" mass="4750">METATVLSIFISSLLLGITGYSIYTAFGPASKDLRDPFEEHEE</sequence>
<gene>
    <name evidence="1" type="primary">psbN</name>
</gene>
<comment type="function">
    <text evidence="1">May play a role in photosystem I and II biogenesis.</text>
</comment>
<comment type="subcellular location">
    <subcellularLocation>
        <location evidence="1">Plastid</location>
        <location evidence="1">Chloroplast thylakoid membrane</location>
        <topology evidence="1">Single-pass membrane protein</topology>
    </subcellularLocation>
</comment>
<comment type="similarity">
    <text evidence="1">Belongs to the PsbN family.</text>
</comment>
<comment type="caution">
    <text evidence="1">Originally thought to be a component of PSII; based on experiments in Synechocystis, N.tabacum and barley, and its absence from PSII in T.elongatus and T.vulcanus, this is probably not true.</text>
</comment>